<reference key="1">
    <citation type="journal article" date="2004" name="Nature">
        <title>Genome evolution in yeasts.</title>
        <authorList>
            <person name="Dujon B."/>
            <person name="Sherman D."/>
            <person name="Fischer G."/>
            <person name="Durrens P."/>
            <person name="Casaregola S."/>
            <person name="Lafontaine I."/>
            <person name="de Montigny J."/>
            <person name="Marck C."/>
            <person name="Neuveglise C."/>
            <person name="Talla E."/>
            <person name="Goffard N."/>
            <person name="Frangeul L."/>
            <person name="Aigle M."/>
            <person name="Anthouard V."/>
            <person name="Babour A."/>
            <person name="Barbe V."/>
            <person name="Barnay S."/>
            <person name="Blanchin S."/>
            <person name="Beckerich J.-M."/>
            <person name="Beyne E."/>
            <person name="Bleykasten C."/>
            <person name="Boisrame A."/>
            <person name="Boyer J."/>
            <person name="Cattolico L."/>
            <person name="Confanioleri F."/>
            <person name="de Daruvar A."/>
            <person name="Despons L."/>
            <person name="Fabre E."/>
            <person name="Fairhead C."/>
            <person name="Ferry-Dumazet H."/>
            <person name="Groppi A."/>
            <person name="Hantraye F."/>
            <person name="Hennequin C."/>
            <person name="Jauniaux N."/>
            <person name="Joyet P."/>
            <person name="Kachouri R."/>
            <person name="Kerrest A."/>
            <person name="Koszul R."/>
            <person name="Lemaire M."/>
            <person name="Lesur I."/>
            <person name="Ma L."/>
            <person name="Muller H."/>
            <person name="Nicaud J.-M."/>
            <person name="Nikolski M."/>
            <person name="Oztas S."/>
            <person name="Ozier-Kalogeropoulos O."/>
            <person name="Pellenz S."/>
            <person name="Potier S."/>
            <person name="Richard G.-F."/>
            <person name="Straub M.-L."/>
            <person name="Suleau A."/>
            <person name="Swennen D."/>
            <person name="Tekaia F."/>
            <person name="Wesolowski-Louvel M."/>
            <person name="Westhof E."/>
            <person name="Wirth B."/>
            <person name="Zeniou-Meyer M."/>
            <person name="Zivanovic Y."/>
            <person name="Bolotin-Fukuhara M."/>
            <person name="Thierry A."/>
            <person name="Bouchier C."/>
            <person name="Caudron B."/>
            <person name="Scarpelli C."/>
            <person name="Gaillardin C."/>
            <person name="Weissenbach J."/>
            <person name="Wincker P."/>
            <person name="Souciet J.-L."/>
        </authorList>
    </citation>
    <scope>NUCLEOTIDE SEQUENCE [LARGE SCALE GENOMIC DNA]</scope>
    <source>
        <strain>ATCC 2001 / BCRC 20586 / JCM 3761 / NBRC 0622 / NRRL Y-65 / CBS 138</strain>
    </source>
</reference>
<dbReference type="EC" id="3.4.19.12"/>
<dbReference type="EMBL" id="CR380955">
    <property type="protein sequence ID" value="CAG60481.1"/>
    <property type="molecule type" value="Genomic_DNA"/>
</dbReference>
<dbReference type="RefSeq" id="XP_447544.1">
    <property type="nucleotide sequence ID" value="XM_447544.1"/>
</dbReference>
<dbReference type="SMR" id="Q6FQF0"/>
<dbReference type="STRING" id="284593.Q6FQF0"/>
<dbReference type="MEROPS" id="C19.005"/>
<dbReference type="EnsemblFungi" id="CAGL0I06765g-T">
    <property type="protein sequence ID" value="CAGL0I06765g-T-p1"/>
    <property type="gene ID" value="CAGL0I06765g"/>
</dbReference>
<dbReference type="KEGG" id="cgr:2889068"/>
<dbReference type="CGD" id="CAL0132056">
    <property type="gene designation" value="CAGL0I06765g"/>
</dbReference>
<dbReference type="VEuPathDB" id="FungiDB:B1J91_I06765g"/>
<dbReference type="VEuPathDB" id="FungiDB:CAGL0I06765g"/>
<dbReference type="eggNOG" id="KOG1868">
    <property type="taxonomic scope" value="Eukaryota"/>
</dbReference>
<dbReference type="HOGENOM" id="CLU_005922_1_0_1"/>
<dbReference type="InParanoid" id="Q6FQF0"/>
<dbReference type="OMA" id="SIEWERY"/>
<dbReference type="Proteomes" id="UP000002428">
    <property type="component" value="Chromosome I"/>
</dbReference>
<dbReference type="GO" id="GO:0031902">
    <property type="term" value="C:late endosome membrane"/>
    <property type="evidence" value="ECO:0007669"/>
    <property type="project" value="UniProtKB-SubCell"/>
</dbReference>
<dbReference type="GO" id="GO:0000502">
    <property type="term" value="C:proteasome complex"/>
    <property type="evidence" value="ECO:0007669"/>
    <property type="project" value="EnsemblFungi"/>
</dbReference>
<dbReference type="GO" id="GO:0004843">
    <property type="term" value="F:cysteine-type deubiquitinase activity"/>
    <property type="evidence" value="ECO:0007669"/>
    <property type="project" value="UniProtKB-EC"/>
</dbReference>
<dbReference type="GO" id="GO:1904669">
    <property type="term" value="P:ATP export"/>
    <property type="evidence" value="ECO:0007669"/>
    <property type="project" value="EnsemblFungi"/>
</dbReference>
<dbReference type="GO" id="GO:0006897">
    <property type="term" value="P:endocytosis"/>
    <property type="evidence" value="ECO:0007669"/>
    <property type="project" value="EnsemblFungi"/>
</dbReference>
<dbReference type="GO" id="GO:0010995">
    <property type="term" value="P:free ubiquitin chain depolymerization"/>
    <property type="evidence" value="ECO:0007669"/>
    <property type="project" value="EnsemblFungi"/>
</dbReference>
<dbReference type="GO" id="GO:0070676">
    <property type="term" value="P:intralumenal vesicle formation"/>
    <property type="evidence" value="ECO:0007669"/>
    <property type="project" value="EnsemblFungi"/>
</dbReference>
<dbReference type="GO" id="GO:0016579">
    <property type="term" value="P:protein deubiquitination"/>
    <property type="evidence" value="ECO:0007669"/>
    <property type="project" value="InterPro"/>
</dbReference>
<dbReference type="GO" id="GO:0006275">
    <property type="term" value="P:regulation of DNA replication"/>
    <property type="evidence" value="ECO:0007669"/>
    <property type="project" value="EnsemblFungi"/>
</dbReference>
<dbReference type="GO" id="GO:0043162">
    <property type="term" value="P:ubiquitin-dependent protein catabolic process via the multivesicular body sorting pathway"/>
    <property type="evidence" value="ECO:0007669"/>
    <property type="project" value="EnsemblFungi"/>
</dbReference>
<dbReference type="CDD" id="cd02674">
    <property type="entry name" value="Peptidase_C19R"/>
    <property type="match status" value="1"/>
</dbReference>
<dbReference type="FunFam" id="3.90.70.10:FF:000115">
    <property type="entry name" value="DOA4p Ubiquitin hydrolase"/>
    <property type="match status" value="1"/>
</dbReference>
<dbReference type="Gene3D" id="3.90.70.10">
    <property type="entry name" value="Cysteine proteinases"/>
    <property type="match status" value="1"/>
</dbReference>
<dbReference type="Gene3D" id="3.40.250.10">
    <property type="entry name" value="Rhodanese-like domain"/>
    <property type="match status" value="1"/>
</dbReference>
<dbReference type="InterPro" id="IPR038765">
    <property type="entry name" value="Papain-like_cys_pep_sf"/>
</dbReference>
<dbReference type="InterPro" id="IPR001394">
    <property type="entry name" value="Peptidase_C19_UCH"/>
</dbReference>
<dbReference type="InterPro" id="IPR001763">
    <property type="entry name" value="Rhodanese-like_dom"/>
</dbReference>
<dbReference type="InterPro" id="IPR036873">
    <property type="entry name" value="Rhodanese-like_dom_sf"/>
</dbReference>
<dbReference type="InterPro" id="IPR050185">
    <property type="entry name" value="Ub_carboxyl-term_hydrolase"/>
</dbReference>
<dbReference type="InterPro" id="IPR018200">
    <property type="entry name" value="USP_CS"/>
</dbReference>
<dbReference type="InterPro" id="IPR028889">
    <property type="entry name" value="USP_dom"/>
</dbReference>
<dbReference type="PANTHER" id="PTHR21646">
    <property type="entry name" value="UBIQUITIN CARBOXYL-TERMINAL HYDROLASE"/>
    <property type="match status" value="1"/>
</dbReference>
<dbReference type="PANTHER" id="PTHR21646:SF95">
    <property type="entry name" value="UBIQUITIN CARBOXYL-TERMINAL HYDROLASE 4-RELATED"/>
    <property type="match status" value="1"/>
</dbReference>
<dbReference type="Pfam" id="PF00581">
    <property type="entry name" value="Rhodanese"/>
    <property type="match status" value="1"/>
</dbReference>
<dbReference type="Pfam" id="PF00443">
    <property type="entry name" value="UCH"/>
    <property type="match status" value="1"/>
</dbReference>
<dbReference type="SMART" id="SM00450">
    <property type="entry name" value="RHOD"/>
    <property type="match status" value="1"/>
</dbReference>
<dbReference type="SUPFAM" id="SSF54001">
    <property type="entry name" value="Cysteine proteinases"/>
    <property type="match status" value="1"/>
</dbReference>
<dbReference type="SUPFAM" id="SSF52821">
    <property type="entry name" value="Rhodanese/Cell cycle control phosphatase"/>
    <property type="match status" value="1"/>
</dbReference>
<dbReference type="PROSITE" id="PS50206">
    <property type="entry name" value="RHODANESE_3"/>
    <property type="match status" value="1"/>
</dbReference>
<dbReference type="PROSITE" id="PS00972">
    <property type="entry name" value="USP_1"/>
    <property type="match status" value="1"/>
</dbReference>
<dbReference type="PROSITE" id="PS50235">
    <property type="entry name" value="USP_3"/>
    <property type="match status" value="1"/>
</dbReference>
<protein>
    <recommendedName>
        <fullName>Ubiquitin carboxyl-terminal hydrolase 4</fullName>
        <ecNumber>3.4.19.12</ecNumber>
    </recommendedName>
    <alternativeName>
        <fullName>Deubiquitinating enzyme 4</fullName>
    </alternativeName>
    <alternativeName>
        <fullName>Ubiquitin thioesterase 4</fullName>
    </alternativeName>
    <alternativeName>
        <fullName>Ubiquitin-specific-processing protease 4</fullName>
    </alternativeName>
</protein>
<proteinExistence type="inferred from homology"/>
<feature type="chain" id="PRO_0000376819" description="Ubiquitin carboxyl-terminal hydrolase 4">
    <location>
        <begin position="1"/>
        <end position="887"/>
    </location>
</feature>
<feature type="domain" description="Rhodanese" evidence="2">
    <location>
        <begin position="202"/>
        <end position="328"/>
    </location>
</feature>
<feature type="domain" description="USP">
    <location>
        <begin position="525"/>
        <end position="885"/>
    </location>
</feature>
<feature type="region of interest" description="Disordered" evidence="4">
    <location>
        <begin position="358"/>
        <end position="465"/>
    </location>
</feature>
<feature type="region of interest" description="Disordered" evidence="4">
    <location>
        <begin position="484"/>
        <end position="505"/>
    </location>
</feature>
<feature type="compositionally biased region" description="Polar residues" evidence="4">
    <location>
        <begin position="387"/>
        <end position="402"/>
    </location>
</feature>
<feature type="active site" description="Nucleophile" evidence="3">
    <location>
        <position position="534"/>
    </location>
</feature>
<feature type="active site" description="Proton acceptor" evidence="3">
    <location>
        <position position="842"/>
    </location>
</feature>
<evidence type="ECO:0000250" key="1"/>
<evidence type="ECO:0000255" key="2">
    <source>
        <dbReference type="PROSITE-ProRule" id="PRU00173"/>
    </source>
</evidence>
<evidence type="ECO:0000255" key="3">
    <source>
        <dbReference type="PROSITE-ProRule" id="PRU10092"/>
    </source>
</evidence>
<evidence type="ECO:0000256" key="4">
    <source>
        <dbReference type="SAM" id="MobiDB-lite"/>
    </source>
</evidence>
<evidence type="ECO:0000305" key="5"/>
<name>UBP4_CANGA</name>
<accession>Q6FQF0</accession>
<sequence length="887" mass="101165">MPGIEQPVSRKNETLVKLSSLADEFVFNDEVQLNLQDVLQECVDTYQNYQDEVKKIKNMDHTESEKVSELCKSAYIYYKIVHNFITKVIPHLPEFEVATGPKASKLQAELIKIYYSLFSRLESDKKISYIKNIIIKHMDTQENNHSVESHEQVKLSNKKLPVNRDAIEIDKDSILQDIRYINGKRSGSGISCSELLSLMKMKEDSLLLIDVRPKLEYDAHHIKTKNIICIEPISFKESYSDQQIEKTSMIPSPKHEIQLFQRRSEFQYIILYTDLEEKSNFYFQQLKSLLEILLQRSFLRPIDDRKTKVLFLSDSLQNWIKNGGEIDKSQEVSKIRNRSISGSGPLLNSLSERKTIGAFPDINRNSTKQMPISPLPSLPGSERTVATPPNGSSTLGRINSPVTHYPKAPLINDSEFHLNINNNHSPPTHLPSKDNNPLASSMPIGSDHKPFMSPQNSLPLAPKPPTLESKNYNFISDRSNIIDQKQNRSRSLEPQLPPIPSTLIRKNSPEKTLSCNQMMDTSFTVGLENMGNSCYINCIIQCIFATTELIKIFLNGTYAKHINKQSKLGSKGVLSHNFAKLLKDMYEENSSKKIGKKHGAVKTLQFKMACASVNSLFKDASQQDCLEFCQFLLDGLHEDLNQCGANPPLKELSPEAEKMRENLSLRVASSIEWERYLTTDFSIIVDLFQGQYASQLRCKVCNRTSTTYQAFSVLSVPVPSGKSCGLLDCFIEFTKTENLEVDEQWFCPSCKKKQPSTKKLTITRLPRNLIIHLKRFDNMMNKNNIFVRYPQILDLTPFWANDSDGKLPPGITDEIPARGQVPPFNYRLYGAACHFGTLYGGHYTSYVDKGPEKGWIYFDDTVYRPVRFQNEFISPSAYVLFYHRITS</sequence>
<gene>
    <name type="primary">DOA4</name>
    <name type="synonym">UBP4</name>
    <name type="ordered locus">CAGL0I06765g</name>
</gene>
<organism>
    <name type="scientific">Candida glabrata (strain ATCC 2001 / BCRC 20586 / JCM 3761 / NBRC 0622 / NRRL Y-65 / CBS 138)</name>
    <name type="common">Yeast</name>
    <name type="synonym">Nakaseomyces glabratus</name>
    <dbReference type="NCBI Taxonomy" id="284593"/>
    <lineage>
        <taxon>Eukaryota</taxon>
        <taxon>Fungi</taxon>
        <taxon>Dikarya</taxon>
        <taxon>Ascomycota</taxon>
        <taxon>Saccharomycotina</taxon>
        <taxon>Saccharomycetes</taxon>
        <taxon>Saccharomycetales</taxon>
        <taxon>Saccharomycetaceae</taxon>
        <taxon>Nakaseomyces</taxon>
    </lineage>
</organism>
<keyword id="KW-0963">Cytoplasm</keyword>
<keyword id="KW-0967">Endosome</keyword>
<keyword id="KW-0378">Hydrolase</keyword>
<keyword id="KW-0472">Membrane</keyword>
<keyword id="KW-0645">Protease</keyword>
<keyword id="KW-1185">Reference proteome</keyword>
<keyword id="KW-0788">Thiol protease</keyword>
<keyword id="KW-0833">Ubl conjugation pathway</keyword>
<comment type="function">
    <text evidence="1">Ubiquitin thioesterase that acts at the late endosome/prevacuolar compartment to recover ubiquitin from ubiquitinated membrane proteins en route to the vacuole. Also removes ubiquitin from soluble proteins targeted to proteasomes. Is essential to maintain a normal level of free ubiquitin. Required for promoting coordination of DNA replication and avoids DNA overreplication (By similarity).</text>
</comment>
<comment type="catalytic activity">
    <reaction>
        <text>Thiol-dependent hydrolysis of ester, thioester, amide, peptide and isopeptide bonds formed by the C-terminal Gly of ubiquitin (a 76-residue protein attached to proteins as an intracellular targeting signal).</text>
        <dbReference type="EC" id="3.4.19.12"/>
    </reaction>
</comment>
<comment type="activity regulation">
    <text evidence="1">RFU1 is an inhibitor of deubiquitination activity.</text>
</comment>
<comment type="subcellular location">
    <subcellularLocation>
        <location evidence="1">Cytoplasm</location>
    </subcellularLocation>
    <subcellularLocation>
        <location evidence="1">Late endosome membrane</location>
        <topology evidence="1">Peripheral membrane protein</topology>
    </subcellularLocation>
</comment>
<comment type="similarity">
    <text evidence="5">Belongs to the peptidase C19 family.</text>
</comment>